<proteinExistence type="evidence at protein level"/>
<organism>
    <name type="scientific">Tityus pachyurus</name>
    <name type="common">Colombian scorpion</name>
    <dbReference type="NCBI Taxonomy" id="288781"/>
    <lineage>
        <taxon>Eukaryota</taxon>
        <taxon>Metazoa</taxon>
        <taxon>Ecdysozoa</taxon>
        <taxon>Arthropoda</taxon>
        <taxon>Chelicerata</taxon>
        <taxon>Arachnida</taxon>
        <taxon>Scorpiones</taxon>
        <taxon>Buthida</taxon>
        <taxon>Buthoidea</taxon>
        <taxon>Buthidae</taxon>
        <taxon>Tityus</taxon>
    </lineage>
</organism>
<sequence>KKEGYLVGNDGCKYSCFTRPAQYCVHECELRKGTDGYCYAWLACYCYNMPDHVRTWSRATNRCGS</sequence>
<protein>
    <recommendedName>
        <fullName>Beta-mammal toxin Tpa2</fullName>
    </recommendedName>
    <alternativeName>
        <fullName>TpNNX</fullName>
    </alternativeName>
</protein>
<dbReference type="SMR" id="P84631"/>
<dbReference type="GO" id="GO:0005576">
    <property type="term" value="C:extracellular region"/>
    <property type="evidence" value="ECO:0007669"/>
    <property type="project" value="UniProtKB-SubCell"/>
</dbReference>
<dbReference type="GO" id="GO:0019871">
    <property type="term" value="F:sodium channel inhibitor activity"/>
    <property type="evidence" value="ECO:0007669"/>
    <property type="project" value="InterPro"/>
</dbReference>
<dbReference type="GO" id="GO:0090729">
    <property type="term" value="F:toxin activity"/>
    <property type="evidence" value="ECO:0007669"/>
    <property type="project" value="UniProtKB-KW"/>
</dbReference>
<dbReference type="GO" id="GO:0006952">
    <property type="term" value="P:defense response"/>
    <property type="evidence" value="ECO:0007669"/>
    <property type="project" value="InterPro"/>
</dbReference>
<dbReference type="CDD" id="cd23106">
    <property type="entry name" value="neurotoxins_LC_scorpion"/>
    <property type="match status" value="1"/>
</dbReference>
<dbReference type="FunFam" id="3.30.30.10:FF:000002">
    <property type="entry name" value="Alpha-like toxin BmK-M1"/>
    <property type="match status" value="1"/>
</dbReference>
<dbReference type="Gene3D" id="3.30.30.10">
    <property type="entry name" value="Knottin, scorpion toxin-like"/>
    <property type="match status" value="1"/>
</dbReference>
<dbReference type="InterPro" id="IPR044062">
    <property type="entry name" value="LCN-type_CS_alpha_beta_dom"/>
</dbReference>
<dbReference type="InterPro" id="IPR003614">
    <property type="entry name" value="Scorpion_toxin-like"/>
</dbReference>
<dbReference type="InterPro" id="IPR036574">
    <property type="entry name" value="Scorpion_toxin-like_sf"/>
</dbReference>
<dbReference type="InterPro" id="IPR018218">
    <property type="entry name" value="Scorpion_toxinL"/>
</dbReference>
<dbReference type="InterPro" id="IPR002061">
    <property type="entry name" value="Scorpion_toxinL/defensin"/>
</dbReference>
<dbReference type="Pfam" id="PF00537">
    <property type="entry name" value="Toxin_3"/>
    <property type="match status" value="1"/>
</dbReference>
<dbReference type="PRINTS" id="PR00285">
    <property type="entry name" value="SCORPNTOXIN"/>
</dbReference>
<dbReference type="SMART" id="SM00505">
    <property type="entry name" value="Knot1"/>
    <property type="match status" value="1"/>
</dbReference>
<dbReference type="SUPFAM" id="SSF57095">
    <property type="entry name" value="Scorpion toxin-like"/>
    <property type="match status" value="1"/>
</dbReference>
<dbReference type="PROSITE" id="PS51863">
    <property type="entry name" value="LCN_CSAB"/>
    <property type="match status" value="1"/>
</dbReference>
<evidence type="ECO:0000255" key="1"/>
<evidence type="ECO:0000255" key="2">
    <source>
        <dbReference type="PROSITE-ProRule" id="PRU01210"/>
    </source>
</evidence>
<evidence type="ECO:0000269" key="3">
    <source>
    </source>
</evidence>
<evidence type="ECO:0000305" key="4"/>
<comment type="function">
    <text evidence="3">Beta toxins bind voltage-independently at site-4 of sodium channels (Nav) and shift the voltage of activation toward more negative potentials thereby affecting sodium channel activation and promoting spontaneous and repetitive firing. This toxin is lethal to mice.</text>
</comment>
<comment type="subcellular location">
    <subcellularLocation>
        <location evidence="3">Secreted</location>
    </subcellularLocation>
</comment>
<comment type="tissue specificity">
    <text evidence="3">Expressed by the venom gland.</text>
</comment>
<comment type="domain">
    <text evidence="4">Has the structural arrangement of an alpha-helix connected to antiparallel beta-sheets by disulfide bonds (CS-alpha/beta).</text>
</comment>
<comment type="mass spectrometry"/>
<comment type="similarity">
    <text evidence="1">Belongs to the long (4 C-C) scorpion toxin superfamily. Sodium channel inhibitor family.</text>
</comment>
<name>SCX2_TITPA</name>
<keyword id="KW-0903">Direct protein sequencing</keyword>
<keyword id="KW-1015">Disulfide bond</keyword>
<keyword id="KW-0872">Ion channel impairing toxin</keyword>
<keyword id="KW-0528">Neurotoxin</keyword>
<keyword id="KW-0964">Secreted</keyword>
<keyword id="KW-0800">Toxin</keyword>
<keyword id="KW-0738">Voltage-gated sodium channel impairing toxin</keyword>
<reference evidence="4" key="1">
    <citation type="journal article" date="2006" name="Biochim. Biophys. Acta">
        <title>Proteomic analysis of the venom and characterization of toxins specific for Na+ - and K+ -channels from the Colombian scorpion Tityus pachyurus.</title>
        <authorList>
            <person name="Barona J."/>
            <person name="Batista C.V.F."/>
            <person name="Zamudio F.Z."/>
            <person name="Gomez-Lagunas F."/>
            <person name="Wanke E."/>
            <person name="Otero R."/>
            <person name="Possani L.D."/>
        </authorList>
    </citation>
    <scope>PROTEIN SEQUENCE</scope>
    <scope>FUNCTION</scope>
    <scope>SUBCELLULAR LOCATION</scope>
    <scope>TISSUE SPECIFICITY</scope>
    <scope>MASS SPECTROMETRY</scope>
    <source>
        <tissue evidence="3">Venom</tissue>
    </source>
</reference>
<feature type="chain" id="PRO_0000239432" description="Beta-mammal toxin Tpa2">
    <location>
        <begin position="1"/>
        <end position="65"/>
    </location>
</feature>
<feature type="domain" description="LCN-type CS-alpha/beta" evidence="2">
    <location>
        <begin position="2"/>
        <end position="64"/>
    </location>
</feature>
<feature type="disulfide bond" evidence="2">
    <location>
        <begin position="12"/>
        <end position="63"/>
    </location>
</feature>
<feature type="disulfide bond" evidence="2">
    <location>
        <begin position="16"/>
        <end position="38"/>
    </location>
</feature>
<feature type="disulfide bond" evidence="2">
    <location>
        <begin position="24"/>
        <end position="44"/>
    </location>
</feature>
<feature type="disulfide bond" evidence="2">
    <location>
        <begin position="28"/>
        <end position="46"/>
    </location>
</feature>
<accession>P84631</accession>